<organism>
    <name type="scientific">Gossypium barbadense</name>
    <name type="common">Sea Island cotton</name>
    <name type="synonym">Hibiscus barbadensis</name>
    <dbReference type="NCBI Taxonomy" id="3634"/>
    <lineage>
        <taxon>Eukaryota</taxon>
        <taxon>Viridiplantae</taxon>
        <taxon>Streptophyta</taxon>
        <taxon>Embryophyta</taxon>
        <taxon>Tracheophyta</taxon>
        <taxon>Spermatophyta</taxon>
        <taxon>Magnoliopsida</taxon>
        <taxon>eudicotyledons</taxon>
        <taxon>Gunneridae</taxon>
        <taxon>Pentapetalae</taxon>
        <taxon>rosids</taxon>
        <taxon>malvids</taxon>
        <taxon>Malvales</taxon>
        <taxon>Malvaceae</taxon>
        <taxon>Malvoideae</taxon>
        <taxon>Gossypium</taxon>
    </lineage>
</organism>
<sequence>MTRIKRGYIARRRRKKISLFASSFRGAHSRLTRTITQQRIRALVSAHRDRDRKKRDFRRLWITRINAVIRGVGVSYSYSRLIHNLYKKQLLLNRKILAQIAISNRNCLYMISNEIRKEGDRKESNEML</sequence>
<comment type="function">
    <text evidence="1">Binds directly to 23S ribosomal RNA and is necessary for the in vitro assembly process of the 50S ribosomal subunit. It is not involved in the protein synthesizing functions of that subunit.</text>
</comment>
<comment type="subcellular location">
    <subcellularLocation>
        <location>Plastid</location>
        <location>Chloroplast</location>
    </subcellularLocation>
</comment>
<comment type="similarity">
    <text evidence="1">Belongs to the bacterial ribosomal protein bL20 family.</text>
</comment>
<reference key="1">
    <citation type="journal article" date="2006" name="Genes Genet. Syst.">
        <title>Complete nucleotide sequence of the cotton (Gossypium barbadense L.) chloroplast genome with a comparative analysis of sequences among 9 dicot plants.</title>
        <authorList>
            <person name="Ibrahim R.I.H."/>
            <person name="Azuma J."/>
            <person name="Sakamoto M."/>
        </authorList>
    </citation>
    <scope>NUCLEOTIDE SEQUENCE [LARGE SCALE GENOMIC DNA]</scope>
</reference>
<gene>
    <name evidence="1" type="primary">rpl20</name>
</gene>
<evidence type="ECO:0000255" key="1">
    <source>
        <dbReference type="HAMAP-Rule" id="MF_00382"/>
    </source>
</evidence>
<evidence type="ECO:0000305" key="2"/>
<keyword id="KW-0150">Chloroplast</keyword>
<keyword id="KW-0934">Plastid</keyword>
<keyword id="KW-0687">Ribonucleoprotein</keyword>
<keyword id="KW-0689">Ribosomal protein</keyword>
<keyword id="KW-0694">RNA-binding</keyword>
<keyword id="KW-0699">rRNA-binding</keyword>
<geneLocation type="chloroplast"/>
<name>RK20_GOSBA</name>
<protein>
    <recommendedName>
        <fullName evidence="1">Large ribosomal subunit protein bL20c</fullName>
    </recommendedName>
    <alternativeName>
        <fullName evidence="2">50S ribosomal protein L20, chloroplastic</fullName>
    </alternativeName>
</protein>
<dbReference type="EMBL" id="AP009123">
    <property type="protein sequence ID" value="BAF41270.1"/>
    <property type="molecule type" value="Genomic_DNA"/>
</dbReference>
<dbReference type="RefSeq" id="YP_913210.1">
    <property type="nucleotide sequence ID" value="NC_008641.1"/>
</dbReference>
<dbReference type="SMR" id="A0ZZ58"/>
<dbReference type="GeneID" id="4575237"/>
<dbReference type="GO" id="GO:0009507">
    <property type="term" value="C:chloroplast"/>
    <property type="evidence" value="ECO:0007669"/>
    <property type="project" value="UniProtKB-SubCell"/>
</dbReference>
<dbReference type="GO" id="GO:1990904">
    <property type="term" value="C:ribonucleoprotein complex"/>
    <property type="evidence" value="ECO:0007669"/>
    <property type="project" value="UniProtKB-KW"/>
</dbReference>
<dbReference type="GO" id="GO:0005840">
    <property type="term" value="C:ribosome"/>
    <property type="evidence" value="ECO:0007669"/>
    <property type="project" value="UniProtKB-KW"/>
</dbReference>
<dbReference type="GO" id="GO:0019843">
    <property type="term" value="F:rRNA binding"/>
    <property type="evidence" value="ECO:0007669"/>
    <property type="project" value="UniProtKB-UniRule"/>
</dbReference>
<dbReference type="GO" id="GO:0003735">
    <property type="term" value="F:structural constituent of ribosome"/>
    <property type="evidence" value="ECO:0007669"/>
    <property type="project" value="InterPro"/>
</dbReference>
<dbReference type="GO" id="GO:0000027">
    <property type="term" value="P:ribosomal large subunit assembly"/>
    <property type="evidence" value="ECO:0007669"/>
    <property type="project" value="UniProtKB-UniRule"/>
</dbReference>
<dbReference type="GO" id="GO:0006412">
    <property type="term" value="P:translation"/>
    <property type="evidence" value="ECO:0007669"/>
    <property type="project" value="InterPro"/>
</dbReference>
<dbReference type="CDD" id="cd07026">
    <property type="entry name" value="Ribosomal_L20"/>
    <property type="match status" value="1"/>
</dbReference>
<dbReference type="FunFam" id="1.10.1900.20:FF:000002">
    <property type="entry name" value="50S ribosomal protein L20, chloroplastic"/>
    <property type="match status" value="1"/>
</dbReference>
<dbReference type="Gene3D" id="6.10.160.10">
    <property type="match status" value="1"/>
</dbReference>
<dbReference type="Gene3D" id="1.10.1900.20">
    <property type="entry name" value="Ribosomal protein L20"/>
    <property type="match status" value="1"/>
</dbReference>
<dbReference type="HAMAP" id="MF_00382">
    <property type="entry name" value="Ribosomal_bL20"/>
    <property type="match status" value="1"/>
</dbReference>
<dbReference type="InterPro" id="IPR005813">
    <property type="entry name" value="Ribosomal_bL20"/>
</dbReference>
<dbReference type="InterPro" id="IPR049946">
    <property type="entry name" value="RIBOSOMAL_L20_CS"/>
</dbReference>
<dbReference type="InterPro" id="IPR035566">
    <property type="entry name" value="Ribosomal_protein_bL20_C"/>
</dbReference>
<dbReference type="NCBIfam" id="TIGR01032">
    <property type="entry name" value="rplT_bact"/>
    <property type="match status" value="1"/>
</dbReference>
<dbReference type="PANTHER" id="PTHR10986">
    <property type="entry name" value="39S RIBOSOMAL PROTEIN L20"/>
    <property type="match status" value="1"/>
</dbReference>
<dbReference type="Pfam" id="PF00453">
    <property type="entry name" value="Ribosomal_L20"/>
    <property type="match status" value="1"/>
</dbReference>
<dbReference type="PRINTS" id="PR00062">
    <property type="entry name" value="RIBOSOMALL20"/>
</dbReference>
<dbReference type="SUPFAM" id="SSF74731">
    <property type="entry name" value="Ribosomal protein L20"/>
    <property type="match status" value="1"/>
</dbReference>
<dbReference type="PROSITE" id="PS00937">
    <property type="entry name" value="RIBOSOMAL_L20"/>
    <property type="match status" value="1"/>
</dbReference>
<feature type="chain" id="PRO_0000276409" description="Large ribosomal subunit protein bL20c">
    <location>
        <begin position="1"/>
        <end position="128"/>
    </location>
</feature>
<proteinExistence type="inferred from homology"/>
<accession>A0ZZ58</accession>